<comment type="function">
    <text evidence="2">Component of the cytochrome c oxidase, the last enzyme in the mitochondrial electron transport chain which drives oxidative phosphorylation. The respiratory chain contains 3 multisubunit complexes succinate dehydrogenase (complex II, CII), ubiquinol-cytochrome c oxidoreductase (cytochrome b-c1 complex, complex III, CIII) and cytochrome c oxidase (complex IV, CIV), that cooperate to transfer electrons derived from NADH and succinate to molecular oxygen, creating an electrochemical gradient over the inner membrane that drives transmembrane transport and the ATP synthase. Cytochrome c oxidase is the component of the respiratory chain that catalyzes the reduction of oxygen to water. Electrons originating from reduced cytochrome c in the intermembrane space (IMS) are transferred via the dinuclear copper A center (CU(A)) of subunit 2 and heme A of subunit 1 to the active site in subunit 1, a binuclear center (BNC) formed by heme A3 and copper B (CU(B)). The BNC reduces molecular oxygen to 2 water molecules using 4 electrons from cytochrome c in the IMS and 4 protons from the mitochondrial matrix.</text>
</comment>
<comment type="pathway">
    <text evidence="2">Energy metabolism; oxidative phosphorylation.</text>
</comment>
<comment type="subunit">
    <text evidence="5 6 7">Component of the cytochrome c oxidase (complex IV, CIV), a multisubunit enzyme composed of 14 subunits. The complex is composed of a catalytic core of 3 subunits MT-CO1, MT-CO2 and MT-CO3, encoded in the mitochondrial DNA, and 11 supernumerary subunits COX4I1 (or COX4I2), COX5A, COX5B, COX6A1 (or COX6A2), COX6B1 (or COX6B2), COX6C, COX7A2 (or COX7A1), COX7B, COX7C, COX8A and NDUFA4, which are encoded in the nuclear genome (PubMed:30030519). The complex exists as a monomer or a dimer and forms supercomplexes (SCs) in the inner mitochondrial membrane with NADH-ubiquinone oxidoreductase (complex I, CI) and ubiquinol-cytochrome c oxidoreductase (cytochrome b-c1 complex, complex III, CIII), resulting in different assemblies (supercomplex SCI(1)III(2)IV(1) and megacomplex MCI(2)III(2)IV(2)) (PubMed:28844695). Interacts with PET100 (PubMed:22356826).</text>
</comment>
<comment type="interaction">
    <interactant intactId="EBI-2606666">
        <id>P14406</id>
    </interactant>
    <interactant intactId="EBI-16439278">
        <id>Q6FHY5</id>
        <label>MEOX2</label>
    </interactant>
    <organismsDiffer>false</organismsDiffer>
    <experiments>3</experiments>
</comment>
<comment type="subcellular location">
    <subcellularLocation>
        <location evidence="7">Mitochondrion inner membrane</location>
        <topology evidence="7">Single-pass membrane protein</topology>
    </subcellularLocation>
</comment>
<comment type="similarity">
    <text evidence="9">Belongs to the cytochrome c oxidase VIIa family.</text>
</comment>
<name>CX7A2_HUMAN</name>
<keyword id="KW-0002">3D-structure</keyword>
<keyword id="KW-0007">Acetylation</keyword>
<keyword id="KW-0903">Direct protein sequencing</keyword>
<keyword id="KW-0472">Membrane</keyword>
<keyword id="KW-0496">Mitochondrion</keyword>
<keyword id="KW-0999">Mitochondrion inner membrane</keyword>
<keyword id="KW-0560">Oxidoreductase</keyword>
<keyword id="KW-1267">Proteomics identification</keyword>
<keyword id="KW-1185">Reference proteome</keyword>
<keyword id="KW-0809">Transit peptide</keyword>
<keyword id="KW-0812">Transmembrane</keyword>
<keyword id="KW-1133">Transmembrane helix</keyword>
<feature type="transit peptide" description="Mitochondrion" evidence="4">
    <location>
        <begin position="1"/>
        <end position="23"/>
    </location>
</feature>
<feature type="chain" id="PRO_0000006145" description="Cytochrome c oxidase subunit 7A2, mitochondrial">
    <location>
        <begin position="24"/>
        <end position="83"/>
    </location>
</feature>
<feature type="topological domain" description="Mitochondrial matrix" evidence="7">
    <location>
        <begin position="24"/>
        <end position="48"/>
    </location>
</feature>
<feature type="transmembrane region" description="Helical" evidence="1">
    <location>
        <begin position="49"/>
        <end position="77"/>
    </location>
</feature>
<feature type="topological domain" description="Mitochondrial intermembrane" evidence="7">
    <location>
        <begin position="78"/>
        <end position="83"/>
    </location>
</feature>
<feature type="modified residue" description="N6-acetyllysine" evidence="3">
    <location>
        <position position="33"/>
    </location>
</feature>
<feature type="sequence variant" id="VAR_012319" description="In dbSNP:rs769314754." evidence="8">
    <original>E</original>
    <variation>D</variation>
    <location>
        <position position="40"/>
    </location>
</feature>
<proteinExistence type="evidence at protein level"/>
<reference key="1">
    <citation type="journal article" date="1989" name="Nucleic Acids Res.">
        <title>Sequence of a cDNA specifying subunit VIIa of human cytochrome c oxidase.</title>
        <authorList>
            <person name="Fabrizi G.M."/>
            <person name="Rizzuto R."/>
            <person name="Nakase H."/>
            <person name="Mita S."/>
            <person name="Lomax M.I."/>
            <person name="Grossman L.I."/>
            <person name="Schon E.A."/>
        </authorList>
    </citation>
    <scope>NUCLEOTIDE SEQUENCE [MRNA]</scope>
    <source>
        <tissue>Endothelial cell</tissue>
    </source>
</reference>
<reference key="2">
    <citation type="journal article" date="2000" name="Biochim. Biophys. Acta">
        <title>Isolation and sequence of the human cytochrome c oxidase subunit VIIaL gene.</title>
        <authorList>
            <person name="Huettemann M."/>
            <person name="Muehlenbein N."/>
            <person name="Schmidt T.R."/>
            <person name="Grossman L.I."/>
            <person name="Kadenbach B."/>
        </authorList>
    </citation>
    <scope>NUCLEOTIDE SEQUENCE [GENOMIC DNA]</scope>
    <source>
        <tissue>Blood</tissue>
    </source>
</reference>
<reference key="3">
    <citation type="submission" date="2004-05" db="EMBL/GenBank/DDBJ databases">
        <title>Cloning of human full open reading frames in Gateway(TM) system entry vector (pDONR201).</title>
        <authorList>
            <person name="Ebert L."/>
            <person name="Schick M."/>
            <person name="Neubert P."/>
            <person name="Schatten R."/>
            <person name="Henze S."/>
            <person name="Korn B."/>
        </authorList>
    </citation>
    <scope>NUCLEOTIDE SEQUENCE [LARGE SCALE MRNA]</scope>
</reference>
<reference key="4">
    <citation type="submission" date="2004-06" db="EMBL/GenBank/DDBJ databases">
        <title>Cloning of human full open reading frames in Gateway(TM) system entry vector (pDONR201).</title>
        <authorList>
            <person name="Halleck A."/>
            <person name="Ebert L."/>
            <person name="Mkoundinya M."/>
            <person name="Schick M."/>
            <person name="Eisenstein S."/>
            <person name="Neubert P."/>
            <person name="Kstrang K."/>
            <person name="Schatten R."/>
            <person name="Shen B."/>
            <person name="Henze S."/>
            <person name="Mar W."/>
            <person name="Korn B."/>
            <person name="Zuo D."/>
            <person name="Hu Y."/>
            <person name="LaBaer J."/>
        </authorList>
    </citation>
    <scope>NUCLEOTIDE SEQUENCE [LARGE SCALE MRNA]</scope>
</reference>
<reference key="5">
    <citation type="journal article" date="2004" name="Nat. Genet.">
        <title>Complete sequencing and characterization of 21,243 full-length human cDNAs.</title>
        <authorList>
            <person name="Ota T."/>
            <person name="Suzuki Y."/>
            <person name="Nishikawa T."/>
            <person name="Otsuki T."/>
            <person name="Sugiyama T."/>
            <person name="Irie R."/>
            <person name="Wakamatsu A."/>
            <person name="Hayashi K."/>
            <person name="Sato H."/>
            <person name="Nagai K."/>
            <person name="Kimura K."/>
            <person name="Makita H."/>
            <person name="Sekine M."/>
            <person name="Obayashi M."/>
            <person name="Nishi T."/>
            <person name="Shibahara T."/>
            <person name="Tanaka T."/>
            <person name="Ishii S."/>
            <person name="Yamamoto J."/>
            <person name="Saito K."/>
            <person name="Kawai Y."/>
            <person name="Isono Y."/>
            <person name="Nakamura Y."/>
            <person name="Nagahari K."/>
            <person name="Murakami K."/>
            <person name="Yasuda T."/>
            <person name="Iwayanagi T."/>
            <person name="Wagatsuma M."/>
            <person name="Shiratori A."/>
            <person name="Sudo H."/>
            <person name="Hosoiri T."/>
            <person name="Kaku Y."/>
            <person name="Kodaira H."/>
            <person name="Kondo H."/>
            <person name="Sugawara M."/>
            <person name="Takahashi M."/>
            <person name="Kanda K."/>
            <person name="Yokoi T."/>
            <person name="Furuya T."/>
            <person name="Kikkawa E."/>
            <person name="Omura Y."/>
            <person name="Abe K."/>
            <person name="Kamihara K."/>
            <person name="Katsuta N."/>
            <person name="Sato K."/>
            <person name="Tanikawa M."/>
            <person name="Yamazaki M."/>
            <person name="Ninomiya K."/>
            <person name="Ishibashi T."/>
            <person name="Yamashita H."/>
            <person name="Murakawa K."/>
            <person name="Fujimori K."/>
            <person name="Tanai H."/>
            <person name="Kimata M."/>
            <person name="Watanabe M."/>
            <person name="Hiraoka S."/>
            <person name="Chiba Y."/>
            <person name="Ishida S."/>
            <person name="Ono Y."/>
            <person name="Takiguchi S."/>
            <person name="Watanabe S."/>
            <person name="Yosida M."/>
            <person name="Hotuta T."/>
            <person name="Kusano J."/>
            <person name="Kanehori K."/>
            <person name="Takahashi-Fujii A."/>
            <person name="Hara H."/>
            <person name="Tanase T.-O."/>
            <person name="Nomura Y."/>
            <person name="Togiya S."/>
            <person name="Komai F."/>
            <person name="Hara R."/>
            <person name="Takeuchi K."/>
            <person name="Arita M."/>
            <person name="Imose N."/>
            <person name="Musashino K."/>
            <person name="Yuuki H."/>
            <person name="Oshima A."/>
            <person name="Sasaki N."/>
            <person name="Aotsuka S."/>
            <person name="Yoshikawa Y."/>
            <person name="Matsunawa H."/>
            <person name="Ichihara T."/>
            <person name="Shiohata N."/>
            <person name="Sano S."/>
            <person name="Moriya S."/>
            <person name="Momiyama H."/>
            <person name="Satoh N."/>
            <person name="Takami S."/>
            <person name="Terashima Y."/>
            <person name="Suzuki O."/>
            <person name="Nakagawa S."/>
            <person name="Senoh A."/>
            <person name="Mizoguchi H."/>
            <person name="Goto Y."/>
            <person name="Shimizu F."/>
            <person name="Wakebe H."/>
            <person name="Hishigaki H."/>
            <person name="Watanabe T."/>
            <person name="Sugiyama A."/>
            <person name="Takemoto M."/>
            <person name="Kawakami B."/>
            <person name="Yamazaki M."/>
            <person name="Watanabe K."/>
            <person name="Kumagai A."/>
            <person name="Itakura S."/>
            <person name="Fukuzumi Y."/>
            <person name="Fujimori Y."/>
            <person name="Komiyama M."/>
            <person name="Tashiro H."/>
            <person name="Tanigami A."/>
            <person name="Fujiwara T."/>
            <person name="Ono T."/>
            <person name="Yamada K."/>
            <person name="Fujii Y."/>
            <person name="Ozaki K."/>
            <person name="Hirao M."/>
            <person name="Ohmori Y."/>
            <person name="Kawabata A."/>
            <person name="Hikiji T."/>
            <person name="Kobatake N."/>
            <person name="Inagaki H."/>
            <person name="Ikema Y."/>
            <person name="Okamoto S."/>
            <person name="Okitani R."/>
            <person name="Kawakami T."/>
            <person name="Noguchi S."/>
            <person name="Itoh T."/>
            <person name="Shigeta K."/>
            <person name="Senba T."/>
            <person name="Matsumura K."/>
            <person name="Nakajima Y."/>
            <person name="Mizuno T."/>
            <person name="Morinaga M."/>
            <person name="Sasaki M."/>
            <person name="Togashi T."/>
            <person name="Oyama M."/>
            <person name="Hata H."/>
            <person name="Watanabe M."/>
            <person name="Komatsu T."/>
            <person name="Mizushima-Sugano J."/>
            <person name="Satoh T."/>
            <person name="Shirai Y."/>
            <person name="Takahashi Y."/>
            <person name="Nakagawa K."/>
            <person name="Okumura K."/>
            <person name="Nagase T."/>
            <person name="Nomura N."/>
            <person name="Kikuchi H."/>
            <person name="Masuho Y."/>
            <person name="Yamashita R."/>
            <person name="Nakai K."/>
            <person name="Yada T."/>
            <person name="Nakamura Y."/>
            <person name="Ohara O."/>
            <person name="Isogai T."/>
            <person name="Sugano S."/>
        </authorList>
    </citation>
    <scope>NUCLEOTIDE SEQUENCE [LARGE SCALE MRNA]</scope>
    <source>
        <tissue>Hippocampus</tissue>
    </source>
</reference>
<reference key="6">
    <citation type="journal article" date="2003" name="Nature">
        <title>The DNA sequence and analysis of human chromosome 6.</title>
        <authorList>
            <person name="Mungall A.J."/>
            <person name="Palmer S.A."/>
            <person name="Sims S.K."/>
            <person name="Edwards C.A."/>
            <person name="Ashurst J.L."/>
            <person name="Wilming L."/>
            <person name="Jones M.C."/>
            <person name="Horton R."/>
            <person name="Hunt S.E."/>
            <person name="Scott C.E."/>
            <person name="Gilbert J.G.R."/>
            <person name="Clamp M.E."/>
            <person name="Bethel G."/>
            <person name="Milne S."/>
            <person name="Ainscough R."/>
            <person name="Almeida J.P."/>
            <person name="Ambrose K.D."/>
            <person name="Andrews T.D."/>
            <person name="Ashwell R.I.S."/>
            <person name="Babbage A.K."/>
            <person name="Bagguley C.L."/>
            <person name="Bailey J."/>
            <person name="Banerjee R."/>
            <person name="Barker D.J."/>
            <person name="Barlow K.F."/>
            <person name="Bates K."/>
            <person name="Beare D.M."/>
            <person name="Beasley H."/>
            <person name="Beasley O."/>
            <person name="Bird C.P."/>
            <person name="Blakey S.E."/>
            <person name="Bray-Allen S."/>
            <person name="Brook J."/>
            <person name="Brown A.J."/>
            <person name="Brown J.Y."/>
            <person name="Burford D.C."/>
            <person name="Burrill W."/>
            <person name="Burton J."/>
            <person name="Carder C."/>
            <person name="Carter N.P."/>
            <person name="Chapman J.C."/>
            <person name="Clark S.Y."/>
            <person name="Clark G."/>
            <person name="Clee C.M."/>
            <person name="Clegg S."/>
            <person name="Cobley V."/>
            <person name="Collier R.E."/>
            <person name="Collins J.E."/>
            <person name="Colman L.K."/>
            <person name="Corby N.R."/>
            <person name="Coville G.J."/>
            <person name="Culley K.M."/>
            <person name="Dhami P."/>
            <person name="Davies J."/>
            <person name="Dunn M."/>
            <person name="Earthrowl M.E."/>
            <person name="Ellington A.E."/>
            <person name="Evans K.A."/>
            <person name="Faulkner L."/>
            <person name="Francis M.D."/>
            <person name="Frankish A."/>
            <person name="Frankland J."/>
            <person name="French L."/>
            <person name="Garner P."/>
            <person name="Garnett J."/>
            <person name="Ghori M.J."/>
            <person name="Gilby L.M."/>
            <person name="Gillson C.J."/>
            <person name="Glithero R.J."/>
            <person name="Grafham D.V."/>
            <person name="Grant M."/>
            <person name="Gribble S."/>
            <person name="Griffiths C."/>
            <person name="Griffiths M.N.D."/>
            <person name="Hall R."/>
            <person name="Halls K.S."/>
            <person name="Hammond S."/>
            <person name="Harley J.L."/>
            <person name="Hart E.A."/>
            <person name="Heath P.D."/>
            <person name="Heathcott R."/>
            <person name="Holmes S.J."/>
            <person name="Howden P.J."/>
            <person name="Howe K.L."/>
            <person name="Howell G.R."/>
            <person name="Huckle E."/>
            <person name="Humphray S.J."/>
            <person name="Humphries M.D."/>
            <person name="Hunt A.R."/>
            <person name="Johnson C.M."/>
            <person name="Joy A.A."/>
            <person name="Kay M."/>
            <person name="Keenan S.J."/>
            <person name="Kimberley A.M."/>
            <person name="King A."/>
            <person name="Laird G.K."/>
            <person name="Langford C."/>
            <person name="Lawlor S."/>
            <person name="Leongamornlert D.A."/>
            <person name="Leversha M."/>
            <person name="Lloyd C.R."/>
            <person name="Lloyd D.M."/>
            <person name="Loveland J.E."/>
            <person name="Lovell J."/>
            <person name="Martin S."/>
            <person name="Mashreghi-Mohammadi M."/>
            <person name="Maslen G.L."/>
            <person name="Matthews L."/>
            <person name="McCann O.T."/>
            <person name="McLaren S.J."/>
            <person name="McLay K."/>
            <person name="McMurray A."/>
            <person name="Moore M.J.F."/>
            <person name="Mullikin J.C."/>
            <person name="Niblett D."/>
            <person name="Nickerson T."/>
            <person name="Novik K.L."/>
            <person name="Oliver K."/>
            <person name="Overton-Larty E.K."/>
            <person name="Parker A."/>
            <person name="Patel R."/>
            <person name="Pearce A.V."/>
            <person name="Peck A.I."/>
            <person name="Phillimore B.J.C.T."/>
            <person name="Phillips S."/>
            <person name="Plumb R.W."/>
            <person name="Porter K.M."/>
            <person name="Ramsey Y."/>
            <person name="Ranby S.A."/>
            <person name="Rice C.M."/>
            <person name="Ross M.T."/>
            <person name="Searle S.M."/>
            <person name="Sehra H.K."/>
            <person name="Sheridan E."/>
            <person name="Skuce C.D."/>
            <person name="Smith S."/>
            <person name="Smith M."/>
            <person name="Spraggon L."/>
            <person name="Squares S.L."/>
            <person name="Steward C.A."/>
            <person name="Sycamore N."/>
            <person name="Tamlyn-Hall G."/>
            <person name="Tester J."/>
            <person name="Theaker A.J."/>
            <person name="Thomas D.W."/>
            <person name="Thorpe A."/>
            <person name="Tracey A."/>
            <person name="Tromans A."/>
            <person name="Tubby B."/>
            <person name="Wall M."/>
            <person name="Wallis J.M."/>
            <person name="West A.P."/>
            <person name="White S.S."/>
            <person name="Whitehead S.L."/>
            <person name="Whittaker H."/>
            <person name="Wild A."/>
            <person name="Willey D.J."/>
            <person name="Wilmer T.E."/>
            <person name="Wood J.M."/>
            <person name="Wray P.W."/>
            <person name="Wyatt J.C."/>
            <person name="Young L."/>
            <person name="Younger R.M."/>
            <person name="Bentley D.R."/>
            <person name="Coulson A."/>
            <person name="Durbin R.M."/>
            <person name="Hubbard T."/>
            <person name="Sulston J.E."/>
            <person name="Dunham I."/>
            <person name="Rogers J."/>
            <person name="Beck S."/>
        </authorList>
    </citation>
    <scope>NUCLEOTIDE SEQUENCE [LARGE SCALE GENOMIC DNA]</scope>
</reference>
<reference key="7">
    <citation type="journal article" date="2004" name="Genome Res.">
        <title>The status, quality, and expansion of the NIH full-length cDNA project: the Mammalian Gene Collection (MGC).</title>
        <authorList>
            <consortium name="The MGC Project Team"/>
        </authorList>
    </citation>
    <scope>NUCLEOTIDE SEQUENCE [LARGE SCALE MRNA]</scope>
    <source>
        <tissue>Brain</tissue>
    </source>
</reference>
<reference key="8">
    <citation type="journal article" date="1992" name="Eur. J. Biochem.">
        <title>Subunits VIIa,b,c of human cytochrome c oxidase. Identification of both 'heart-type' and 'liver-type' isoforms of subunit VIIa in human heart.</title>
        <authorList>
            <person name="van Kuilenburg A.B.P."/>
            <person name="van Beeumen J.J."/>
            <person name="van der Meer N.M."/>
            <person name="Muijsers A.O."/>
        </authorList>
    </citation>
    <scope>PROTEIN SEQUENCE OF 24-53</scope>
    <source>
        <tissue>Heart</tissue>
        <tissue>Liver</tissue>
    </source>
</reference>
<reference key="9">
    <citation type="journal article" date="2011" name="BMC Syst. Biol.">
        <title>Initial characterization of the human central proteome.</title>
        <authorList>
            <person name="Burkard T.R."/>
            <person name="Planyavsky M."/>
            <person name="Kaupe I."/>
            <person name="Breitwieser F.P."/>
            <person name="Buerckstuemmer T."/>
            <person name="Bennett K.L."/>
            <person name="Superti-Furga G."/>
            <person name="Colinge J."/>
        </authorList>
    </citation>
    <scope>IDENTIFICATION BY MASS SPECTROMETRY [LARGE SCALE ANALYSIS]</scope>
</reference>
<reference key="10">
    <citation type="journal article" date="2012" name="Genome Biol.">
        <title>Iterative orthology prediction uncovers new mitochondrial proteins and identifies C12orf62 as the human ortholog of COX14, a protein involved in the assembly of cytochrome c oxidase.</title>
        <authorList>
            <person name="Szklarczyk R."/>
            <person name="Wanschers B.F."/>
            <person name="Cuypers T.D."/>
            <person name="Esseling J.J."/>
            <person name="Riemersma M."/>
            <person name="van den Brand M.A."/>
            <person name="Gloerich J."/>
            <person name="Lasonder E."/>
            <person name="van den Heuvel L.P."/>
            <person name="Nijtmans L.G."/>
            <person name="Huynen M.A."/>
        </authorList>
    </citation>
    <scope>INTERACTION WITH PET100</scope>
</reference>
<reference key="11">
    <citation type="journal article" date="2014" name="J. Proteomics">
        <title>An enzyme assisted RP-RPLC approach for in-depth analysis of human liver phosphoproteome.</title>
        <authorList>
            <person name="Bian Y."/>
            <person name="Song C."/>
            <person name="Cheng K."/>
            <person name="Dong M."/>
            <person name="Wang F."/>
            <person name="Huang J."/>
            <person name="Sun D."/>
            <person name="Wang L."/>
            <person name="Ye M."/>
            <person name="Zou H."/>
        </authorList>
    </citation>
    <scope>IDENTIFICATION BY MASS SPECTROMETRY [LARGE SCALE ANALYSIS]</scope>
    <source>
        <tissue>Liver</tissue>
    </source>
</reference>
<reference key="12">
    <citation type="journal article" date="2015" name="Proteomics">
        <title>N-terminome analysis of the human mitochondrial proteome.</title>
        <authorList>
            <person name="Vaca Jacome A.S."/>
            <person name="Rabilloud T."/>
            <person name="Schaeffer-Reiss C."/>
            <person name="Rompais M."/>
            <person name="Ayoub D."/>
            <person name="Lane L."/>
            <person name="Bairoch A."/>
            <person name="Van Dorsselaer A."/>
            <person name="Carapito C."/>
        </authorList>
    </citation>
    <scope>IDENTIFICATION BY MASS SPECTROMETRY [LARGE SCALE ANALYSIS]</scope>
</reference>
<reference key="13">
    <citation type="journal article" date="2017" name="Cell">
        <title>Architecture of human mitochondrial respiratory megacomplex I2III2IV2.</title>
        <authorList>
            <person name="Guo R."/>
            <person name="Zong S."/>
            <person name="Wu M."/>
            <person name="Gu J."/>
            <person name="Yang M."/>
        </authorList>
    </citation>
    <scope>STRUCTURE BY ELECTRON MICROSCOPY (3.90 ANGSTROMS)</scope>
    <scope>SUBUNIT</scope>
</reference>
<reference key="14">
    <citation type="journal article" date="2018" name="Cell Res.">
        <title>Structure of the intact 14-subunit human cytochrome c oxidase.</title>
        <authorList>
            <person name="Zong S."/>
            <person name="Wu M."/>
            <person name="Gu J."/>
            <person name="Liu T."/>
            <person name="Guo R."/>
            <person name="Yang M."/>
        </authorList>
    </citation>
    <scope>STRUCTURE BY ELECTRON MICROSCOPY (3.60 ANGSTROMS) OF 25-80</scope>
</reference>
<reference key="15">
    <citation type="submission" date="2001-12" db="UniProtKB">
        <authorList>
            <person name="Devreese B."/>
        </authorList>
    </citation>
    <scope>VARIANT ASP-40</scope>
</reference>
<gene>
    <name type="primary">COX7A2</name>
    <name type="synonym">COX7AL</name>
</gene>
<protein>
    <recommendedName>
        <fullName>Cytochrome c oxidase subunit 7A2, mitochondrial</fullName>
    </recommendedName>
    <alternativeName>
        <fullName>Cytochrome c oxidase subunit VIIa-liver/heart</fullName>
        <shortName>Cytochrome c oxidase subunit VIIa-L</shortName>
        <shortName>Cytochrome c oxidase subunit VIIaL</shortName>
    </alternativeName>
</protein>
<evidence type="ECO:0000250" key="1">
    <source>
        <dbReference type="UniProtKB" id="P07470"/>
    </source>
</evidence>
<evidence type="ECO:0000250" key="2">
    <source>
        <dbReference type="UniProtKB" id="P10174"/>
    </source>
</evidence>
<evidence type="ECO:0000250" key="3">
    <source>
        <dbReference type="UniProtKB" id="P48771"/>
    </source>
</evidence>
<evidence type="ECO:0000269" key="4">
    <source>
    </source>
</evidence>
<evidence type="ECO:0000269" key="5">
    <source>
    </source>
</evidence>
<evidence type="ECO:0000269" key="6">
    <source>
    </source>
</evidence>
<evidence type="ECO:0000269" key="7">
    <source>
    </source>
</evidence>
<evidence type="ECO:0000269" key="8">
    <source ref="15"/>
</evidence>
<evidence type="ECO:0000305" key="9"/>
<accession>P14406</accession>
<accession>B2R5E1</accession>
<accession>Q3MIH5</accession>
<accession>Q5TF59</accession>
<accession>Q6FGI2</accession>
<organism>
    <name type="scientific">Homo sapiens</name>
    <name type="common">Human</name>
    <dbReference type="NCBI Taxonomy" id="9606"/>
    <lineage>
        <taxon>Eukaryota</taxon>
        <taxon>Metazoa</taxon>
        <taxon>Chordata</taxon>
        <taxon>Craniata</taxon>
        <taxon>Vertebrata</taxon>
        <taxon>Euteleostomi</taxon>
        <taxon>Mammalia</taxon>
        <taxon>Eutheria</taxon>
        <taxon>Euarchontoglires</taxon>
        <taxon>Primates</taxon>
        <taxon>Haplorrhini</taxon>
        <taxon>Catarrhini</taxon>
        <taxon>Hominidae</taxon>
        <taxon>Homo</taxon>
    </lineage>
</organism>
<dbReference type="EMBL" id="X15822">
    <property type="protein sequence ID" value="CAA33820.1"/>
    <property type="molecule type" value="mRNA"/>
</dbReference>
<dbReference type="EMBL" id="AF134406">
    <property type="protein sequence ID" value="AAF61396.1"/>
    <property type="molecule type" value="Genomic_DNA"/>
</dbReference>
<dbReference type="EMBL" id="CR407646">
    <property type="protein sequence ID" value="CAG28574.1"/>
    <property type="molecule type" value="mRNA"/>
</dbReference>
<dbReference type="EMBL" id="CR542125">
    <property type="protein sequence ID" value="CAG46922.1"/>
    <property type="molecule type" value="mRNA"/>
</dbReference>
<dbReference type="EMBL" id="AK312154">
    <property type="protein sequence ID" value="BAG35088.1"/>
    <property type="molecule type" value="mRNA"/>
</dbReference>
<dbReference type="EMBL" id="AL080250">
    <property type="status" value="NOT_ANNOTATED_CDS"/>
    <property type="molecule type" value="Genomic_DNA"/>
</dbReference>
<dbReference type="EMBL" id="BC101826">
    <property type="protein sequence ID" value="AAI01827.1"/>
    <property type="molecule type" value="mRNA"/>
</dbReference>
<dbReference type="EMBL" id="BC101828">
    <property type="protein sequence ID" value="AAI01829.1"/>
    <property type="molecule type" value="mRNA"/>
</dbReference>
<dbReference type="CCDS" id="CCDS34486.3"/>
<dbReference type="PIR" id="S06897">
    <property type="entry name" value="OSHU7L"/>
</dbReference>
<dbReference type="RefSeq" id="NP_001353221.2">
    <property type="nucleotide sequence ID" value="NM_001366292.3"/>
</dbReference>
<dbReference type="RefSeq" id="NP_001353222.1">
    <property type="nucleotide sequence ID" value="NM_001366293.2"/>
</dbReference>
<dbReference type="RefSeq" id="NP_001856.3">
    <property type="nucleotide sequence ID" value="NM_001865.6"/>
</dbReference>
<dbReference type="PDB" id="5Z62">
    <property type="method" value="EM"/>
    <property type="resolution" value="3.60 A"/>
    <property type="chains" value="J=25-80"/>
</dbReference>
<dbReference type="PDBsum" id="5Z62"/>
<dbReference type="SMR" id="P14406"/>
<dbReference type="BioGRID" id="107740">
    <property type="interactions" value="112"/>
</dbReference>
<dbReference type="ComplexPortal" id="CPX-6123">
    <property type="entry name" value="Mitochondrial respiratory chain complex IV"/>
</dbReference>
<dbReference type="CORUM" id="P14406"/>
<dbReference type="FunCoup" id="P14406">
    <property type="interactions" value="689"/>
</dbReference>
<dbReference type="IntAct" id="P14406">
    <property type="interactions" value="44"/>
</dbReference>
<dbReference type="MINT" id="P14406"/>
<dbReference type="STRING" id="9606.ENSP00000359098"/>
<dbReference type="TCDB" id="3.D.4.11.1">
    <property type="family name" value="the proton-translocating cytochrome oxidase (cox) superfamily"/>
</dbReference>
<dbReference type="GlyGen" id="P14406">
    <property type="glycosylation" value="1 site, 1 O-linked glycan (1 site)"/>
</dbReference>
<dbReference type="iPTMnet" id="P14406"/>
<dbReference type="PhosphoSitePlus" id="P14406"/>
<dbReference type="SwissPalm" id="P14406"/>
<dbReference type="BioMuta" id="COX7A2"/>
<dbReference type="jPOST" id="P14406"/>
<dbReference type="MassIVE" id="P14406"/>
<dbReference type="PaxDb" id="9606-ENSP00000359098"/>
<dbReference type="PeptideAtlas" id="P14406"/>
<dbReference type="ProteomicsDB" id="53050"/>
<dbReference type="Pumba" id="P14406"/>
<dbReference type="TopDownProteomics" id="P14406"/>
<dbReference type="DNASU" id="1347"/>
<dbReference type="Ensembl" id="ENST00000684430.2">
    <property type="protein sequence ID" value="ENSP00000506727.1"/>
    <property type="gene ID" value="ENSG00000112695.13"/>
</dbReference>
<dbReference type="GeneID" id="1347"/>
<dbReference type="KEGG" id="hsa:1347"/>
<dbReference type="MANE-Select" id="ENST00000684430.2">
    <property type="protein sequence ID" value="ENSP00000506727.1"/>
    <property type="RefSeq nucleotide sequence ID" value="NM_001366293.2"/>
    <property type="RefSeq protein sequence ID" value="NP_001353222.1"/>
</dbReference>
<dbReference type="AGR" id="HGNC:2288"/>
<dbReference type="CTD" id="1347"/>
<dbReference type="GeneCards" id="COX7A2"/>
<dbReference type="HGNC" id="HGNC:2288">
    <property type="gene designation" value="COX7A2"/>
</dbReference>
<dbReference type="HPA" id="ENSG00000112695">
    <property type="expression patterns" value="Low tissue specificity"/>
</dbReference>
<dbReference type="MalaCards" id="COX7A2"/>
<dbReference type="MIM" id="123996">
    <property type="type" value="gene"/>
</dbReference>
<dbReference type="neXtProt" id="NX_P14406"/>
<dbReference type="OpenTargets" id="ENSG00000112695"/>
<dbReference type="PharmGKB" id="PA26806"/>
<dbReference type="eggNOG" id="ENOG502S4DT">
    <property type="taxonomic scope" value="Eukaryota"/>
</dbReference>
<dbReference type="GeneTree" id="ENSGT00940000154550"/>
<dbReference type="InParanoid" id="P14406"/>
<dbReference type="OrthoDB" id="5966508at2759"/>
<dbReference type="PAN-GO" id="P14406">
    <property type="GO annotations" value="3 GO annotations based on evolutionary models"/>
</dbReference>
<dbReference type="PhylomeDB" id="P14406"/>
<dbReference type="BioCyc" id="MetaCyc:HS03606-MONOMER"/>
<dbReference type="PathwayCommons" id="P14406"/>
<dbReference type="Reactome" id="R-HSA-5628897">
    <property type="pathway name" value="TP53 Regulates Metabolic Genes"/>
</dbReference>
<dbReference type="Reactome" id="R-HSA-611105">
    <property type="pathway name" value="Respiratory electron transport"/>
</dbReference>
<dbReference type="Reactome" id="R-HSA-9707564">
    <property type="pathway name" value="Cytoprotection by HMOX1"/>
</dbReference>
<dbReference type="Reactome" id="R-HSA-9864848">
    <property type="pathway name" value="Complex IV assembly"/>
</dbReference>
<dbReference type="SignaLink" id="P14406"/>
<dbReference type="SIGNOR" id="P14406"/>
<dbReference type="UniPathway" id="UPA00705"/>
<dbReference type="BioGRID-ORCS" id="1347">
    <property type="hits" value="33 hits in 1115 CRISPR screens"/>
</dbReference>
<dbReference type="ChiTaRS" id="COX7A2">
    <property type="organism name" value="human"/>
</dbReference>
<dbReference type="GeneWiki" id="COX7A2"/>
<dbReference type="GenomeRNAi" id="1347"/>
<dbReference type="Pharos" id="P14406">
    <property type="development level" value="Tbio"/>
</dbReference>
<dbReference type="PRO" id="PR:P14406"/>
<dbReference type="Proteomes" id="UP000005640">
    <property type="component" value="Chromosome 6"/>
</dbReference>
<dbReference type="RNAct" id="P14406">
    <property type="molecule type" value="protein"/>
</dbReference>
<dbReference type="Bgee" id="ENSG00000112695">
    <property type="expression patterns" value="Expressed in endothelial cell and 208 other cell types or tissues"/>
</dbReference>
<dbReference type="ExpressionAtlas" id="P14406">
    <property type="expression patterns" value="baseline and differential"/>
</dbReference>
<dbReference type="GO" id="GO:0005743">
    <property type="term" value="C:mitochondrial inner membrane"/>
    <property type="evidence" value="ECO:0000304"/>
    <property type="project" value="Reactome"/>
</dbReference>
<dbReference type="GO" id="GO:0031966">
    <property type="term" value="C:mitochondrial membrane"/>
    <property type="evidence" value="ECO:0000314"/>
    <property type="project" value="ComplexPortal"/>
</dbReference>
<dbReference type="GO" id="GO:0005739">
    <property type="term" value="C:mitochondrion"/>
    <property type="evidence" value="ECO:0006056"/>
    <property type="project" value="FlyBase"/>
</dbReference>
<dbReference type="GO" id="GO:0098803">
    <property type="term" value="C:respiratory chain complex"/>
    <property type="evidence" value="ECO:0000318"/>
    <property type="project" value="GO_Central"/>
</dbReference>
<dbReference type="GO" id="GO:0045277">
    <property type="term" value="C:respiratory chain complex IV"/>
    <property type="evidence" value="ECO:0007669"/>
    <property type="project" value="Ensembl"/>
</dbReference>
<dbReference type="GO" id="GO:0016491">
    <property type="term" value="F:oxidoreductase activity"/>
    <property type="evidence" value="ECO:0007669"/>
    <property type="project" value="UniProtKB-KW"/>
</dbReference>
<dbReference type="GO" id="GO:0045333">
    <property type="term" value="P:cellular respiration"/>
    <property type="evidence" value="ECO:0000303"/>
    <property type="project" value="ComplexPortal"/>
</dbReference>
<dbReference type="GO" id="GO:0006123">
    <property type="term" value="P:mitochondrial electron transport, cytochrome c to oxygen"/>
    <property type="evidence" value="ECO:0000303"/>
    <property type="project" value="ComplexPortal"/>
</dbReference>
<dbReference type="GO" id="GO:0097250">
    <property type="term" value="P:mitochondrial respirasome assembly"/>
    <property type="evidence" value="ECO:0000318"/>
    <property type="project" value="GO_Central"/>
</dbReference>
<dbReference type="CDD" id="cd00928">
    <property type="entry name" value="Cyt_c_Oxidase_VIIa"/>
    <property type="match status" value="1"/>
</dbReference>
<dbReference type="FunFam" id="4.10.91.10:FF:000001">
    <property type="entry name" value="Cytochrome c oxidase subunit 7A1, mitochondrial"/>
    <property type="match status" value="1"/>
</dbReference>
<dbReference type="Gene3D" id="4.10.91.10">
    <property type="entry name" value="Cytochrome c oxidase, subunit VIIa"/>
    <property type="match status" value="1"/>
</dbReference>
<dbReference type="InterPro" id="IPR039297">
    <property type="entry name" value="COX7a"/>
</dbReference>
<dbReference type="InterPro" id="IPR036539">
    <property type="entry name" value="Cyt_c_oxidase_su7a_sf"/>
</dbReference>
<dbReference type="InterPro" id="IPR003177">
    <property type="entry name" value="Cytc_oxidase_su7a_met"/>
</dbReference>
<dbReference type="PANTHER" id="PTHR10510">
    <property type="entry name" value="CYTOCHROME C OXIDASE POLYPEPTIDE 7A"/>
    <property type="match status" value="1"/>
</dbReference>
<dbReference type="PANTHER" id="PTHR10510:SF15">
    <property type="entry name" value="CYTOCHROME C OXIDASE SUBUNIT 7A2, MITOCHONDRIAL"/>
    <property type="match status" value="1"/>
</dbReference>
<dbReference type="Pfam" id="PF02238">
    <property type="entry name" value="COX7a"/>
    <property type="match status" value="1"/>
</dbReference>
<dbReference type="SUPFAM" id="SSF81419">
    <property type="entry name" value="Mitochondrial cytochrome c oxidase subunit VIIa"/>
    <property type="match status" value="1"/>
</dbReference>
<sequence>MLRNLLALRQIGQRTISTASRRHFKNKVPEKQKLFQEDDEIPLYLKGGVADALLYRATMILTVGGTAYAIYELAVASFPKKQE</sequence>